<organism>
    <name type="scientific">Legionella pneumophila subsp. pneumophila (strain Philadelphia 1 / ATCC 33152 / DSM 7513)</name>
    <dbReference type="NCBI Taxonomy" id="272624"/>
    <lineage>
        <taxon>Bacteria</taxon>
        <taxon>Pseudomonadati</taxon>
        <taxon>Pseudomonadota</taxon>
        <taxon>Gammaproteobacteria</taxon>
        <taxon>Legionellales</taxon>
        <taxon>Legionellaceae</taxon>
        <taxon>Legionella</taxon>
    </lineage>
</organism>
<evidence type="ECO:0000255" key="1">
    <source>
        <dbReference type="HAMAP-Rule" id="MF_00041"/>
    </source>
</evidence>
<dbReference type="EC" id="6.1.1.16" evidence="1"/>
<dbReference type="EMBL" id="AE017354">
    <property type="protein sequence ID" value="AAU27390.1"/>
    <property type="molecule type" value="Genomic_DNA"/>
</dbReference>
<dbReference type="RefSeq" id="WP_010947038.1">
    <property type="nucleotide sequence ID" value="NC_002942.5"/>
</dbReference>
<dbReference type="RefSeq" id="YP_095337.1">
    <property type="nucleotide sequence ID" value="NC_002942.5"/>
</dbReference>
<dbReference type="SMR" id="Q5ZVY1"/>
<dbReference type="STRING" id="272624.lpg1307"/>
<dbReference type="PaxDb" id="272624-lpg1307"/>
<dbReference type="GeneID" id="57035300"/>
<dbReference type="KEGG" id="lpn:lpg1307"/>
<dbReference type="PATRIC" id="fig|272624.6.peg.1377"/>
<dbReference type="eggNOG" id="COG0215">
    <property type="taxonomic scope" value="Bacteria"/>
</dbReference>
<dbReference type="HOGENOM" id="CLU_013528_0_1_6"/>
<dbReference type="OrthoDB" id="9815130at2"/>
<dbReference type="Proteomes" id="UP000000609">
    <property type="component" value="Chromosome"/>
</dbReference>
<dbReference type="GO" id="GO:0005829">
    <property type="term" value="C:cytosol"/>
    <property type="evidence" value="ECO:0007669"/>
    <property type="project" value="TreeGrafter"/>
</dbReference>
<dbReference type="GO" id="GO:0005524">
    <property type="term" value="F:ATP binding"/>
    <property type="evidence" value="ECO:0007669"/>
    <property type="project" value="UniProtKB-UniRule"/>
</dbReference>
<dbReference type="GO" id="GO:0004817">
    <property type="term" value="F:cysteine-tRNA ligase activity"/>
    <property type="evidence" value="ECO:0007669"/>
    <property type="project" value="UniProtKB-UniRule"/>
</dbReference>
<dbReference type="GO" id="GO:0008270">
    <property type="term" value="F:zinc ion binding"/>
    <property type="evidence" value="ECO:0007669"/>
    <property type="project" value="UniProtKB-UniRule"/>
</dbReference>
<dbReference type="GO" id="GO:0006423">
    <property type="term" value="P:cysteinyl-tRNA aminoacylation"/>
    <property type="evidence" value="ECO:0007669"/>
    <property type="project" value="UniProtKB-UniRule"/>
</dbReference>
<dbReference type="CDD" id="cd07963">
    <property type="entry name" value="Anticodon_Ia_Cys"/>
    <property type="match status" value="1"/>
</dbReference>
<dbReference type="CDD" id="cd00672">
    <property type="entry name" value="CysRS_core"/>
    <property type="match status" value="1"/>
</dbReference>
<dbReference type="FunFam" id="3.40.50.620:FF:000009">
    <property type="entry name" value="Cysteine--tRNA ligase"/>
    <property type="match status" value="1"/>
</dbReference>
<dbReference type="Gene3D" id="1.20.120.1910">
    <property type="entry name" value="Cysteine-tRNA ligase, C-terminal anti-codon recognition domain"/>
    <property type="match status" value="1"/>
</dbReference>
<dbReference type="Gene3D" id="3.40.50.620">
    <property type="entry name" value="HUPs"/>
    <property type="match status" value="1"/>
</dbReference>
<dbReference type="HAMAP" id="MF_00041">
    <property type="entry name" value="Cys_tRNA_synth"/>
    <property type="match status" value="1"/>
</dbReference>
<dbReference type="InterPro" id="IPR015803">
    <property type="entry name" value="Cys-tRNA-ligase"/>
</dbReference>
<dbReference type="InterPro" id="IPR015273">
    <property type="entry name" value="Cys-tRNA-synt_Ia_DALR"/>
</dbReference>
<dbReference type="InterPro" id="IPR024909">
    <property type="entry name" value="Cys-tRNA/MSH_ligase"/>
</dbReference>
<dbReference type="InterPro" id="IPR056411">
    <property type="entry name" value="CysS_C"/>
</dbReference>
<dbReference type="InterPro" id="IPR014729">
    <property type="entry name" value="Rossmann-like_a/b/a_fold"/>
</dbReference>
<dbReference type="InterPro" id="IPR032678">
    <property type="entry name" value="tRNA-synt_1_cat_dom"/>
</dbReference>
<dbReference type="InterPro" id="IPR009080">
    <property type="entry name" value="tRNAsynth_Ia_anticodon-bd"/>
</dbReference>
<dbReference type="NCBIfam" id="TIGR00435">
    <property type="entry name" value="cysS"/>
    <property type="match status" value="1"/>
</dbReference>
<dbReference type="PANTHER" id="PTHR10890:SF3">
    <property type="entry name" value="CYSTEINE--TRNA LIGASE, CYTOPLASMIC"/>
    <property type="match status" value="1"/>
</dbReference>
<dbReference type="PANTHER" id="PTHR10890">
    <property type="entry name" value="CYSTEINYL-TRNA SYNTHETASE"/>
    <property type="match status" value="1"/>
</dbReference>
<dbReference type="Pfam" id="PF23493">
    <property type="entry name" value="CysS_C"/>
    <property type="match status" value="1"/>
</dbReference>
<dbReference type="Pfam" id="PF09190">
    <property type="entry name" value="DALR_2"/>
    <property type="match status" value="1"/>
</dbReference>
<dbReference type="Pfam" id="PF01406">
    <property type="entry name" value="tRNA-synt_1e"/>
    <property type="match status" value="1"/>
</dbReference>
<dbReference type="PRINTS" id="PR00983">
    <property type="entry name" value="TRNASYNTHCYS"/>
</dbReference>
<dbReference type="SMART" id="SM00840">
    <property type="entry name" value="DALR_2"/>
    <property type="match status" value="1"/>
</dbReference>
<dbReference type="SUPFAM" id="SSF47323">
    <property type="entry name" value="Anticodon-binding domain of a subclass of class I aminoacyl-tRNA synthetases"/>
    <property type="match status" value="1"/>
</dbReference>
<dbReference type="SUPFAM" id="SSF52374">
    <property type="entry name" value="Nucleotidylyl transferase"/>
    <property type="match status" value="1"/>
</dbReference>
<name>SYC_LEGPH</name>
<sequence>MLHLYNSLTRKKEPFVSLKPGTIGMYVCGITVYDHCHLGHARSMVAFDVMVRYLRSQGFDVTYVRNITDIDDKIIARASERGVSIDELTAQYIDAMNNDTHALNILPPDHEPRATGHIETIIRLIQRLLEKGNAYVSENGDVCYEVDTFPEYGKLSHKDIEGLVSGSRVEIVKEKRSPLDFVLWKKAKPGEPSWPSPWGEGRPGWHIECSAMAMHELGEQFDIHGGGLDLQFPHHENEIAQSEAATGKPFANYWLHVGMLQVNGEKMAKSIGNFYTIADVLKEHHPEVIRYFLLSSHYRSPLNYSEENLLNAKKALIRLYQAVKDVPPQTEDSKLDEYWQVQFNQAMNDDFNTPVALSVLFQLAHEVNKSNSPALAHTLKNLAGILGFLQKDPESFLQSGLAEEEKLVIEQLIAERLQARAERNWAKADQIRADLLSKGIELEDGATGTTWRRIAE</sequence>
<accession>Q5ZVY1</accession>
<comment type="catalytic activity">
    <reaction evidence="1">
        <text>tRNA(Cys) + L-cysteine + ATP = L-cysteinyl-tRNA(Cys) + AMP + diphosphate</text>
        <dbReference type="Rhea" id="RHEA:17773"/>
        <dbReference type="Rhea" id="RHEA-COMP:9661"/>
        <dbReference type="Rhea" id="RHEA-COMP:9679"/>
        <dbReference type="ChEBI" id="CHEBI:30616"/>
        <dbReference type="ChEBI" id="CHEBI:33019"/>
        <dbReference type="ChEBI" id="CHEBI:35235"/>
        <dbReference type="ChEBI" id="CHEBI:78442"/>
        <dbReference type="ChEBI" id="CHEBI:78517"/>
        <dbReference type="ChEBI" id="CHEBI:456215"/>
        <dbReference type="EC" id="6.1.1.16"/>
    </reaction>
</comment>
<comment type="cofactor">
    <cofactor evidence="1">
        <name>Zn(2+)</name>
        <dbReference type="ChEBI" id="CHEBI:29105"/>
    </cofactor>
    <text evidence="1">Binds 1 zinc ion per subunit.</text>
</comment>
<comment type="subunit">
    <text evidence="1">Monomer.</text>
</comment>
<comment type="subcellular location">
    <subcellularLocation>
        <location evidence="1">Cytoplasm</location>
    </subcellularLocation>
</comment>
<comment type="similarity">
    <text evidence="1">Belongs to the class-I aminoacyl-tRNA synthetase family.</text>
</comment>
<proteinExistence type="inferred from homology"/>
<keyword id="KW-0030">Aminoacyl-tRNA synthetase</keyword>
<keyword id="KW-0067">ATP-binding</keyword>
<keyword id="KW-0963">Cytoplasm</keyword>
<keyword id="KW-0436">Ligase</keyword>
<keyword id="KW-0479">Metal-binding</keyword>
<keyword id="KW-0547">Nucleotide-binding</keyword>
<keyword id="KW-0648">Protein biosynthesis</keyword>
<keyword id="KW-1185">Reference proteome</keyword>
<keyword id="KW-0862">Zinc</keyword>
<gene>
    <name evidence="1" type="primary">cysS</name>
    <name type="ordered locus">lpg1307</name>
</gene>
<feature type="chain" id="PRO_0000159416" description="Cysteine--tRNA ligase">
    <location>
        <begin position="1"/>
        <end position="456"/>
    </location>
</feature>
<feature type="short sequence motif" description="'HIGH' region">
    <location>
        <begin position="30"/>
        <end position="40"/>
    </location>
</feature>
<feature type="short sequence motif" description="'KMSKS' region">
    <location>
        <begin position="266"/>
        <end position="270"/>
    </location>
</feature>
<feature type="binding site" evidence="1">
    <location>
        <position position="28"/>
    </location>
    <ligand>
        <name>Zn(2+)</name>
        <dbReference type="ChEBI" id="CHEBI:29105"/>
    </ligand>
</feature>
<feature type="binding site" evidence="1">
    <location>
        <position position="209"/>
    </location>
    <ligand>
        <name>Zn(2+)</name>
        <dbReference type="ChEBI" id="CHEBI:29105"/>
    </ligand>
</feature>
<feature type="binding site" evidence="1">
    <location>
        <position position="234"/>
    </location>
    <ligand>
        <name>Zn(2+)</name>
        <dbReference type="ChEBI" id="CHEBI:29105"/>
    </ligand>
</feature>
<feature type="binding site" evidence="1">
    <location>
        <position position="238"/>
    </location>
    <ligand>
        <name>Zn(2+)</name>
        <dbReference type="ChEBI" id="CHEBI:29105"/>
    </ligand>
</feature>
<feature type="binding site" evidence="1">
    <location>
        <position position="269"/>
    </location>
    <ligand>
        <name>ATP</name>
        <dbReference type="ChEBI" id="CHEBI:30616"/>
    </ligand>
</feature>
<protein>
    <recommendedName>
        <fullName evidence="1">Cysteine--tRNA ligase</fullName>
        <ecNumber evidence="1">6.1.1.16</ecNumber>
    </recommendedName>
    <alternativeName>
        <fullName evidence="1">Cysteinyl-tRNA synthetase</fullName>
        <shortName evidence="1">CysRS</shortName>
    </alternativeName>
</protein>
<reference key="1">
    <citation type="journal article" date="2004" name="Science">
        <title>The genomic sequence of the accidental pathogen Legionella pneumophila.</title>
        <authorList>
            <person name="Chien M."/>
            <person name="Morozova I."/>
            <person name="Shi S."/>
            <person name="Sheng H."/>
            <person name="Chen J."/>
            <person name="Gomez S.M."/>
            <person name="Asamani G."/>
            <person name="Hill K."/>
            <person name="Nuara J."/>
            <person name="Feder M."/>
            <person name="Rineer J."/>
            <person name="Greenberg J.J."/>
            <person name="Steshenko V."/>
            <person name="Park S.H."/>
            <person name="Zhao B."/>
            <person name="Teplitskaya E."/>
            <person name="Edwards J.R."/>
            <person name="Pampou S."/>
            <person name="Georghiou A."/>
            <person name="Chou I.-C."/>
            <person name="Iannuccilli W."/>
            <person name="Ulz M.E."/>
            <person name="Kim D.H."/>
            <person name="Geringer-Sameth A."/>
            <person name="Goldsberry C."/>
            <person name="Morozov P."/>
            <person name="Fischer S.G."/>
            <person name="Segal G."/>
            <person name="Qu X."/>
            <person name="Rzhetsky A."/>
            <person name="Zhang P."/>
            <person name="Cayanis E."/>
            <person name="De Jong P.J."/>
            <person name="Ju J."/>
            <person name="Kalachikov S."/>
            <person name="Shuman H.A."/>
            <person name="Russo J.J."/>
        </authorList>
    </citation>
    <scope>NUCLEOTIDE SEQUENCE [LARGE SCALE GENOMIC DNA]</scope>
    <source>
        <strain>Philadelphia 1 / ATCC 33152 / DSM 7513</strain>
    </source>
</reference>